<reference key="1">
    <citation type="journal article" date="2010" name="ISME J.">
        <title>The complete genome sequence of the algal symbiont Dinoroseobacter shibae: a hitchhiker's guide to life in the sea.</title>
        <authorList>
            <person name="Wagner-Dobler I."/>
            <person name="Ballhausen B."/>
            <person name="Berger M."/>
            <person name="Brinkhoff T."/>
            <person name="Buchholz I."/>
            <person name="Bunk B."/>
            <person name="Cypionka H."/>
            <person name="Daniel R."/>
            <person name="Drepper T."/>
            <person name="Gerdts G."/>
            <person name="Hahnke S."/>
            <person name="Han C."/>
            <person name="Jahn D."/>
            <person name="Kalhoefer D."/>
            <person name="Kiss H."/>
            <person name="Klenk H.P."/>
            <person name="Kyrpides N."/>
            <person name="Liebl W."/>
            <person name="Liesegang H."/>
            <person name="Meincke L."/>
            <person name="Pati A."/>
            <person name="Petersen J."/>
            <person name="Piekarski T."/>
            <person name="Pommerenke C."/>
            <person name="Pradella S."/>
            <person name="Pukall R."/>
            <person name="Rabus R."/>
            <person name="Stackebrandt E."/>
            <person name="Thole S."/>
            <person name="Thompson L."/>
            <person name="Tielen P."/>
            <person name="Tomasch J."/>
            <person name="von Jan M."/>
            <person name="Wanphrut N."/>
            <person name="Wichels A."/>
            <person name="Zech H."/>
            <person name="Simon M."/>
        </authorList>
    </citation>
    <scope>NUCLEOTIDE SEQUENCE [LARGE SCALE GENOMIC DNA]</scope>
    <source>
        <strain>DSM 16493 / NCIMB 14021 / DFL 12</strain>
    </source>
</reference>
<accession>A8LQQ6</accession>
<name>RS18_DINSH</name>
<dbReference type="EMBL" id="CP000830">
    <property type="protein sequence ID" value="ABV93923.1"/>
    <property type="molecule type" value="Genomic_DNA"/>
</dbReference>
<dbReference type="RefSeq" id="WP_005982441.1">
    <property type="nucleotide sequence ID" value="NC_009952.1"/>
</dbReference>
<dbReference type="SMR" id="A8LQQ6"/>
<dbReference type="STRING" id="398580.Dshi_2187"/>
<dbReference type="GeneID" id="80818498"/>
<dbReference type="KEGG" id="dsh:Dshi_2187"/>
<dbReference type="eggNOG" id="COG0238">
    <property type="taxonomic scope" value="Bacteria"/>
</dbReference>
<dbReference type="HOGENOM" id="CLU_148710_2_3_5"/>
<dbReference type="OrthoDB" id="9812008at2"/>
<dbReference type="Proteomes" id="UP000006833">
    <property type="component" value="Chromosome"/>
</dbReference>
<dbReference type="GO" id="GO:0022627">
    <property type="term" value="C:cytosolic small ribosomal subunit"/>
    <property type="evidence" value="ECO:0007669"/>
    <property type="project" value="TreeGrafter"/>
</dbReference>
<dbReference type="GO" id="GO:0070181">
    <property type="term" value="F:small ribosomal subunit rRNA binding"/>
    <property type="evidence" value="ECO:0007669"/>
    <property type="project" value="TreeGrafter"/>
</dbReference>
<dbReference type="GO" id="GO:0003735">
    <property type="term" value="F:structural constituent of ribosome"/>
    <property type="evidence" value="ECO:0007669"/>
    <property type="project" value="InterPro"/>
</dbReference>
<dbReference type="GO" id="GO:0006412">
    <property type="term" value="P:translation"/>
    <property type="evidence" value="ECO:0007669"/>
    <property type="project" value="UniProtKB-UniRule"/>
</dbReference>
<dbReference type="Gene3D" id="4.10.640.10">
    <property type="entry name" value="Ribosomal protein S18"/>
    <property type="match status" value="1"/>
</dbReference>
<dbReference type="HAMAP" id="MF_00270">
    <property type="entry name" value="Ribosomal_bS18"/>
    <property type="match status" value="1"/>
</dbReference>
<dbReference type="InterPro" id="IPR001648">
    <property type="entry name" value="Ribosomal_bS18"/>
</dbReference>
<dbReference type="InterPro" id="IPR018275">
    <property type="entry name" value="Ribosomal_bS18_CS"/>
</dbReference>
<dbReference type="InterPro" id="IPR036870">
    <property type="entry name" value="Ribosomal_bS18_sf"/>
</dbReference>
<dbReference type="NCBIfam" id="TIGR00165">
    <property type="entry name" value="S18"/>
    <property type="match status" value="1"/>
</dbReference>
<dbReference type="PANTHER" id="PTHR13479">
    <property type="entry name" value="30S RIBOSOMAL PROTEIN S18"/>
    <property type="match status" value="1"/>
</dbReference>
<dbReference type="PANTHER" id="PTHR13479:SF40">
    <property type="entry name" value="SMALL RIBOSOMAL SUBUNIT PROTEIN BS18M"/>
    <property type="match status" value="1"/>
</dbReference>
<dbReference type="Pfam" id="PF01084">
    <property type="entry name" value="Ribosomal_S18"/>
    <property type="match status" value="1"/>
</dbReference>
<dbReference type="PRINTS" id="PR00974">
    <property type="entry name" value="RIBOSOMALS18"/>
</dbReference>
<dbReference type="SUPFAM" id="SSF46911">
    <property type="entry name" value="Ribosomal protein S18"/>
    <property type="match status" value="1"/>
</dbReference>
<dbReference type="PROSITE" id="PS00057">
    <property type="entry name" value="RIBOSOMAL_S18"/>
    <property type="match status" value="1"/>
</dbReference>
<evidence type="ECO:0000255" key="1">
    <source>
        <dbReference type="HAMAP-Rule" id="MF_00270"/>
    </source>
</evidence>
<evidence type="ECO:0000305" key="2"/>
<protein>
    <recommendedName>
        <fullName evidence="1">Small ribosomal subunit protein bS18</fullName>
    </recommendedName>
    <alternativeName>
        <fullName evidence="2">30S ribosomal protein S18</fullName>
    </alternativeName>
</protein>
<organism>
    <name type="scientific">Dinoroseobacter shibae (strain DSM 16493 / NCIMB 14021 / DFL 12)</name>
    <dbReference type="NCBI Taxonomy" id="398580"/>
    <lineage>
        <taxon>Bacteria</taxon>
        <taxon>Pseudomonadati</taxon>
        <taxon>Pseudomonadota</taxon>
        <taxon>Alphaproteobacteria</taxon>
        <taxon>Rhodobacterales</taxon>
        <taxon>Roseobacteraceae</taxon>
        <taxon>Dinoroseobacter</taxon>
    </lineage>
</organism>
<comment type="function">
    <text evidence="1">Binds as a heterodimer with protein bS6 to the central domain of the 16S rRNA, where it helps stabilize the platform of the 30S subunit.</text>
</comment>
<comment type="subunit">
    <text evidence="1">Part of the 30S ribosomal subunit. Forms a tight heterodimer with protein bS6.</text>
</comment>
<comment type="similarity">
    <text evidence="1">Belongs to the bacterial ribosomal protein bS18 family.</text>
</comment>
<sequence length="75" mass="8678">MAAKPFFRRRKVCPFSGDNAPKIDYKDTRLLQRYISERGKIVPSRITAVSAKKQRELARAIKRARFLALLPYAVK</sequence>
<proteinExistence type="inferred from homology"/>
<keyword id="KW-1185">Reference proteome</keyword>
<keyword id="KW-0687">Ribonucleoprotein</keyword>
<keyword id="KW-0689">Ribosomal protein</keyword>
<keyword id="KW-0694">RNA-binding</keyword>
<keyword id="KW-0699">rRNA-binding</keyword>
<feature type="chain" id="PRO_1000078700" description="Small ribosomal subunit protein bS18">
    <location>
        <begin position="1"/>
        <end position="75"/>
    </location>
</feature>
<gene>
    <name evidence="1" type="primary">rpsR</name>
    <name type="ordered locus">Dshi_2187</name>
</gene>